<evidence type="ECO:0000255" key="1">
    <source>
        <dbReference type="PROSITE-ProRule" id="PRU00691"/>
    </source>
</evidence>
<evidence type="ECO:0000305" key="2"/>
<proteinExistence type="evidence at protein level"/>
<comment type="interaction">
    <interactant intactId="EBI-863606">
        <id>P52232</id>
    </interactant>
    <interactant intactId="EBI-862771">
        <id>P73728</id>
        <label>sll1621</label>
    </interactant>
    <organismsDiffer>false</organismsDiffer>
    <experiments>2</experiments>
</comment>
<comment type="interaction">
    <interactant intactId="EBI-863606">
        <id>P52232</id>
    </interactant>
    <interactant intactId="EBI-862753">
        <id>P73348</id>
        <label>slr1198</label>
    </interactant>
    <organismsDiffer>false</organismsDiffer>
    <experiments>2</experiments>
</comment>
<comment type="similarity">
    <text evidence="2">Belongs to the thioredoxin family.</text>
</comment>
<accession>P52232</accession>
<sequence>MAVKKQFANFAEMLAGSPKPVLVDFYATWCGPCQMMAPILEQVGSHLRQQIQVVKIDTDKYPAIATQYQIQSLPTLVLFKQGQPVHRMEGVQQAAQLIQQLQVFV</sequence>
<organism>
    <name type="scientific">Synechocystis sp. (strain ATCC 27184 / PCC 6803 / Kazusa)</name>
    <dbReference type="NCBI Taxonomy" id="1111708"/>
    <lineage>
        <taxon>Bacteria</taxon>
        <taxon>Bacillati</taxon>
        <taxon>Cyanobacteriota</taxon>
        <taxon>Cyanophyceae</taxon>
        <taxon>Synechococcales</taxon>
        <taxon>Merismopediaceae</taxon>
        <taxon>Synechocystis</taxon>
    </lineage>
</organism>
<feature type="chain" id="PRO_0000120139" description="Thioredoxin-like protein slr0233">
    <location>
        <begin position="1"/>
        <end position="105"/>
    </location>
</feature>
<feature type="domain" description="Thioredoxin" evidence="1">
    <location>
        <begin position="1"/>
        <end position="102"/>
    </location>
</feature>
<feature type="disulfide bond" description="Redox-active" evidence="1">
    <location>
        <begin position="30"/>
        <end position="33"/>
    </location>
</feature>
<dbReference type="EMBL" id="BA000022">
    <property type="protein sequence ID" value="BAA10238.1"/>
    <property type="molecule type" value="Genomic_DNA"/>
</dbReference>
<dbReference type="PIR" id="S76386">
    <property type="entry name" value="S76386"/>
</dbReference>
<dbReference type="SMR" id="P52232"/>
<dbReference type="IntAct" id="P52232">
    <property type="interactions" value="13"/>
</dbReference>
<dbReference type="STRING" id="1148.gene:10499737"/>
<dbReference type="PaxDb" id="1148-1001610"/>
<dbReference type="EnsemblBacteria" id="BAA10238">
    <property type="protein sequence ID" value="BAA10238"/>
    <property type="gene ID" value="BAA10238"/>
</dbReference>
<dbReference type="KEGG" id="syn:slr0233"/>
<dbReference type="eggNOG" id="COG3118">
    <property type="taxonomic scope" value="Bacteria"/>
</dbReference>
<dbReference type="InParanoid" id="P52232"/>
<dbReference type="PhylomeDB" id="P52232"/>
<dbReference type="Proteomes" id="UP000001425">
    <property type="component" value="Chromosome"/>
</dbReference>
<dbReference type="GO" id="GO:0005737">
    <property type="term" value="C:cytoplasm"/>
    <property type="evidence" value="ECO:0000318"/>
    <property type="project" value="GO_Central"/>
</dbReference>
<dbReference type="GO" id="GO:0005829">
    <property type="term" value="C:cytosol"/>
    <property type="evidence" value="ECO:0000318"/>
    <property type="project" value="GO_Central"/>
</dbReference>
<dbReference type="GO" id="GO:0015035">
    <property type="term" value="F:protein-disulfide reductase activity"/>
    <property type="evidence" value="ECO:0000318"/>
    <property type="project" value="GO_Central"/>
</dbReference>
<dbReference type="GO" id="GO:0045454">
    <property type="term" value="P:cell redox homeostasis"/>
    <property type="evidence" value="ECO:0000318"/>
    <property type="project" value="GO_Central"/>
</dbReference>
<dbReference type="CDD" id="cd02947">
    <property type="entry name" value="TRX_family"/>
    <property type="match status" value="1"/>
</dbReference>
<dbReference type="FunFam" id="3.40.30.10:FF:000001">
    <property type="entry name" value="Thioredoxin"/>
    <property type="match status" value="1"/>
</dbReference>
<dbReference type="Gene3D" id="3.40.30.10">
    <property type="entry name" value="Glutaredoxin"/>
    <property type="match status" value="1"/>
</dbReference>
<dbReference type="InterPro" id="IPR005746">
    <property type="entry name" value="Thioredoxin"/>
</dbReference>
<dbReference type="InterPro" id="IPR036249">
    <property type="entry name" value="Thioredoxin-like_sf"/>
</dbReference>
<dbReference type="InterPro" id="IPR017937">
    <property type="entry name" value="Thioredoxin_CS"/>
</dbReference>
<dbReference type="InterPro" id="IPR013766">
    <property type="entry name" value="Thioredoxin_domain"/>
</dbReference>
<dbReference type="NCBIfam" id="TIGR01068">
    <property type="entry name" value="thioredoxin"/>
    <property type="match status" value="1"/>
</dbReference>
<dbReference type="PANTHER" id="PTHR45663">
    <property type="entry name" value="GEO12009P1"/>
    <property type="match status" value="1"/>
</dbReference>
<dbReference type="PANTHER" id="PTHR45663:SF11">
    <property type="entry name" value="GEO12009P1"/>
    <property type="match status" value="1"/>
</dbReference>
<dbReference type="Pfam" id="PF00085">
    <property type="entry name" value="Thioredoxin"/>
    <property type="match status" value="1"/>
</dbReference>
<dbReference type="PIRSF" id="PIRSF000077">
    <property type="entry name" value="Thioredoxin"/>
    <property type="match status" value="1"/>
</dbReference>
<dbReference type="PRINTS" id="PR00421">
    <property type="entry name" value="THIOREDOXIN"/>
</dbReference>
<dbReference type="SUPFAM" id="SSF52833">
    <property type="entry name" value="Thioredoxin-like"/>
    <property type="match status" value="1"/>
</dbReference>
<dbReference type="PROSITE" id="PS00194">
    <property type="entry name" value="THIOREDOXIN_1"/>
    <property type="match status" value="1"/>
</dbReference>
<dbReference type="PROSITE" id="PS51352">
    <property type="entry name" value="THIOREDOXIN_2"/>
    <property type="match status" value="1"/>
</dbReference>
<protein>
    <recommendedName>
        <fullName>Thioredoxin-like protein slr0233</fullName>
    </recommendedName>
</protein>
<gene>
    <name type="ordered locus">slr0233</name>
</gene>
<reference key="1">
    <citation type="journal article" date="1995" name="DNA Res.">
        <title>Sequence analysis of the genome of the unicellular cyanobacterium Synechocystis sp. strain PCC6803. I. Sequence features in the 1 Mb region from map positions 64% to 92% of the genome.</title>
        <authorList>
            <person name="Kaneko T."/>
            <person name="Tanaka A."/>
            <person name="Sato S."/>
            <person name="Kotani H."/>
            <person name="Sazuka T."/>
            <person name="Miyajima N."/>
            <person name="Sugiura M."/>
            <person name="Tabata S."/>
        </authorList>
    </citation>
    <scope>NUCLEOTIDE SEQUENCE [LARGE SCALE GENOMIC DNA]</scope>
    <source>
        <strain>ATCC 27184 / PCC 6803 / N-1</strain>
    </source>
</reference>
<reference key="2">
    <citation type="journal article" date="1996" name="DNA Res.">
        <title>Sequence analysis of the genome of the unicellular cyanobacterium Synechocystis sp. strain PCC6803. II. Sequence determination of the entire genome and assignment of potential protein-coding regions.</title>
        <authorList>
            <person name="Kaneko T."/>
            <person name="Sato S."/>
            <person name="Kotani H."/>
            <person name="Tanaka A."/>
            <person name="Asamizu E."/>
            <person name="Nakamura Y."/>
            <person name="Miyajima N."/>
            <person name="Hirosawa M."/>
            <person name="Sugiura M."/>
            <person name="Sasamoto S."/>
            <person name="Kimura T."/>
            <person name="Hosouchi T."/>
            <person name="Matsuno A."/>
            <person name="Muraki A."/>
            <person name="Nakazaki N."/>
            <person name="Naruo K."/>
            <person name="Okumura S."/>
            <person name="Shimpo S."/>
            <person name="Takeuchi C."/>
            <person name="Wada T."/>
            <person name="Watanabe A."/>
            <person name="Yamada M."/>
            <person name="Yasuda M."/>
            <person name="Tabata S."/>
        </authorList>
    </citation>
    <scope>NUCLEOTIDE SEQUENCE [LARGE SCALE GENOMIC DNA]</scope>
    <source>
        <strain>ATCC 27184 / PCC 6803 / Kazusa</strain>
    </source>
</reference>
<keyword id="KW-1015">Disulfide bond</keyword>
<keyword id="KW-0249">Electron transport</keyword>
<keyword id="KW-0676">Redox-active center</keyword>
<keyword id="KW-1185">Reference proteome</keyword>
<keyword id="KW-0813">Transport</keyword>
<name>THIO1_SYNY3</name>